<proteinExistence type="inferred from homology"/>
<gene>
    <name evidence="1" type="primary">rpsT</name>
    <name type="ordered locus">YPK_3590</name>
</gene>
<comment type="function">
    <text evidence="1">Binds directly to 16S ribosomal RNA.</text>
</comment>
<comment type="similarity">
    <text evidence="1">Belongs to the bacterial ribosomal protein bS20 family.</text>
</comment>
<keyword id="KW-0687">Ribonucleoprotein</keyword>
<keyword id="KW-0689">Ribosomal protein</keyword>
<keyword id="KW-0694">RNA-binding</keyword>
<keyword id="KW-0699">rRNA-binding</keyword>
<protein>
    <recommendedName>
        <fullName evidence="1">Small ribosomal subunit protein bS20</fullName>
    </recommendedName>
    <alternativeName>
        <fullName evidence="3">30S ribosomal protein S20</fullName>
    </alternativeName>
</protein>
<feature type="chain" id="PRO_1000126539" description="Small ribosomal subunit protein bS20">
    <location>
        <begin position="1"/>
        <end position="87"/>
    </location>
</feature>
<feature type="region of interest" description="Disordered" evidence="2">
    <location>
        <begin position="1"/>
        <end position="25"/>
    </location>
</feature>
<organism>
    <name type="scientific">Yersinia pseudotuberculosis serotype O:3 (strain YPIII)</name>
    <dbReference type="NCBI Taxonomy" id="502800"/>
    <lineage>
        <taxon>Bacteria</taxon>
        <taxon>Pseudomonadati</taxon>
        <taxon>Pseudomonadota</taxon>
        <taxon>Gammaproteobacteria</taxon>
        <taxon>Enterobacterales</taxon>
        <taxon>Yersiniaceae</taxon>
        <taxon>Yersinia</taxon>
    </lineage>
</organism>
<reference key="1">
    <citation type="submission" date="2008-02" db="EMBL/GenBank/DDBJ databases">
        <title>Complete sequence of Yersinia pseudotuberculosis YPIII.</title>
        <authorList>
            <consortium name="US DOE Joint Genome Institute"/>
            <person name="Copeland A."/>
            <person name="Lucas S."/>
            <person name="Lapidus A."/>
            <person name="Glavina del Rio T."/>
            <person name="Dalin E."/>
            <person name="Tice H."/>
            <person name="Bruce D."/>
            <person name="Goodwin L."/>
            <person name="Pitluck S."/>
            <person name="Munk A.C."/>
            <person name="Brettin T."/>
            <person name="Detter J.C."/>
            <person name="Han C."/>
            <person name="Tapia R."/>
            <person name="Schmutz J."/>
            <person name="Larimer F."/>
            <person name="Land M."/>
            <person name="Hauser L."/>
            <person name="Challacombe J.F."/>
            <person name="Green L."/>
            <person name="Lindler L.E."/>
            <person name="Nikolich M.P."/>
            <person name="Richardson P."/>
        </authorList>
    </citation>
    <scope>NUCLEOTIDE SEQUENCE [LARGE SCALE GENOMIC DNA]</scope>
    <source>
        <strain>YPIII</strain>
    </source>
</reference>
<dbReference type="EMBL" id="CP000950">
    <property type="protein sequence ID" value="ACA69857.1"/>
    <property type="molecule type" value="Genomic_DNA"/>
</dbReference>
<dbReference type="RefSeq" id="WP_002220715.1">
    <property type="nucleotide sequence ID" value="NZ_CP009792.1"/>
</dbReference>
<dbReference type="SMR" id="B1JL00"/>
<dbReference type="GeneID" id="97457675"/>
<dbReference type="KEGG" id="ypy:YPK_3590"/>
<dbReference type="PATRIC" id="fig|502800.11.peg.4338"/>
<dbReference type="GO" id="GO:0005829">
    <property type="term" value="C:cytosol"/>
    <property type="evidence" value="ECO:0007669"/>
    <property type="project" value="TreeGrafter"/>
</dbReference>
<dbReference type="GO" id="GO:0015935">
    <property type="term" value="C:small ribosomal subunit"/>
    <property type="evidence" value="ECO:0007669"/>
    <property type="project" value="TreeGrafter"/>
</dbReference>
<dbReference type="GO" id="GO:0070181">
    <property type="term" value="F:small ribosomal subunit rRNA binding"/>
    <property type="evidence" value="ECO:0007669"/>
    <property type="project" value="TreeGrafter"/>
</dbReference>
<dbReference type="GO" id="GO:0003735">
    <property type="term" value="F:structural constituent of ribosome"/>
    <property type="evidence" value="ECO:0007669"/>
    <property type="project" value="InterPro"/>
</dbReference>
<dbReference type="GO" id="GO:0006412">
    <property type="term" value="P:translation"/>
    <property type="evidence" value="ECO:0007669"/>
    <property type="project" value="UniProtKB-UniRule"/>
</dbReference>
<dbReference type="FunFam" id="1.20.58.110:FF:000001">
    <property type="entry name" value="30S ribosomal protein S20"/>
    <property type="match status" value="1"/>
</dbReference>
<dbReference type="Gene3D" id="1.20.58.110">
    <property type="entry name" value="Ribosomal protein S20"/>
    <property type="match status" value="1"/>
</dbReference>
<dbReference type="HAMAP" id="MF_00500">
    <property type="entry name" value="Ribosomal_bS20"/>
    <property type="match status" value="1"/>
</dbReference>
<dbReference type="InterPro" id="IPR002583">
    <property type="entry name" value="Ribosomal_bS20"/>
</dbReference>
<dbReference type="InterPro" id="IPR036510">
    <property type="entry name" value="Ribosomal_bS20_sf"/>
</dbReference>
<dbReference type="NCBIfam" id="TIGR00029">
    <property type="entry name" value="S20"/>
    <property type="match status" value="1"/>
</dbReference>
<dbReference type="PANTHER" id="PTHR33398">
    <property type="entry name" value="30S RIBOSOMAL PROTEIN S20"/>
    <property type="match status" value="1"/>
</dbReference>
<dbReference type="PANTHER" id="PTHR33398:SF1">
    <property type="entry name" value="SMALL RIBOSOMAL SUBUNIT PROTEIN BS20C"/>
    <property type="match status" value="1"/>
</dbReference>
<dbReference type="Pfam" id="PF01649">
    <property type="entry name" value="Ribosomal_S20p"/>
    <property type="match status" value="1"/>
</dbReference>
<dbReference type="SUPFAM" id="SSF46992">
    <property type="entry name" value="Ribosomal protein S20"/>
    <property type="match status" value="1"/>
</dbReference>
<evidence type="ECO:0000255" key="1">
    <source>
        <dbReference type="HAMAP-Rule" id="MF_00500"/>
    </source>
</evidence>
<evidence type="ECO:0000256" key="2">
    <source>
        <dbReference type="SAM" id="MobiDB-lite"/>
    </source>
</evidence>
<evidence type="ECO:0000305" key="3"/>
<name>RS20_YERPY</name>
<accession>B1JL00</accession>
<sequence>MANIKSAKKRAVQSEKRRKHNASRRSMVRTFIKKVYAAIAAGDKDAAQKAFNEMQPIVDRQSCKGLIHKNKAARHKSNLVAQINAMQ</sequence>